<evidence type="ECO:0000255" key="1">
    <source>
        <dbReference type="HAMAP-Rule" id="MF_00087"/>
    </source>
</evidence>
<gene>
    <name evidence="1" type="primary">hemA</name>
    <name type="ordered locus">NMB0576</name>
</gene>
<proteinExistence type="inferred from homology"/>
<protein>
    <recommendedName>
        <fullName evidence="1">Glutamyl-tRNA reductase</fullName>
        <shortName evidence="1">GluTR</shortName>
        <ecNumber evidence="1">1.2.1.70</ecNumber>
    </recommendedName>
</protein>
<organism>
    <name type="scientific">Neisseria meningitidis serogroup B (strain ATCC BAA-335 / MC58)</name>
    <dbReference type="NCBI Taxonomy" id="122586"/>
    <lineage>
        <taxon>Bacteria</taxon>
        <taxon>Pseudomonadati</taxon>
        <taxon>Pseudomonadota</taxon>
        <taxon>Betaproteobacteria</taxon>
        <taxon>Neisseriales</taxon>
        <taxon>Neisseriaceae</taxon>
        <taxon>Neisseria</taxon>
    </lineage>
</organism>
<reference key="1">
    <citation type="journal article" date="2000" name="Science">
        <title>Complete genome sequence of Neisseria meningitidis serogroup B strain MC58.</title>
        <authorList>
            <person name="Tettelin H."/>
            <person name="Saunders N.J."/>
            <person name="Heidelberg J.F."/>
            <person name="Jeffries A.C."/>
            <person name="Nelson K.E."/>
            <person name="Eisen J.A."/>
            <person name="Ketchum K.A."/>
            <person name="Hood D.W."/>
            <person name="Peden J.F."/>
            <person name="Dodson R.J."/>
            <person name="Nelson W.C."/>
            <person name="Gwinn M.L."/>
            <person name="DeBoy R.T."/>
            <person name="Peterson J.D."/>
            <person name="Hickey E.K."/>
            <person name="Haft D.H."/>
            <person name="Salzberg S.L."/>
            <person name="White O."/>
            <person name="Fleischmann R.D."/>
            <person name="Dougherty B.A."/>
            <person name="Mason T.M."/>
            <person name="Ciecko A."/>
            <person name="Parksey D.S."/>
            <person name="Blair E."/>
            <person name="Cittone H."/>
            <person name="Clark E.B."/>
            <person name="Cotton M.D."/>
            <person name="Utterback T.R."/>
            <person name="Khouri H.M."/>
            <person name="Qin H."/>
            <person name="Vamathevan J.J."/>
            <person name="Gill J."/>
            <person name="Scarlato V."/>
            <person name="Masignani V."/>
            <person name="Pizza M."/>
            <person name="Grandi G."/>
            <person name="Sun L."/>
            <person name="Smith H.O."/>
            <person name="Fraser C.M."/>
            <person name="Moxon E.R."/>
            <person name="Rappuoli R."/>
            <person name="Venter J.C."/>
        </authorList>
    </citation>
    <scope>NUCLEOTIDE SEQUENCE [LARGE SCALE GENOMIC DNA]</scope>
    <source>
        <strain>ATCC BAA-335 / MC58</strain>
    </source>
</reference>
<feature type="chain" id="PRO_0000114046" description="Glutamyl-tRNA reductase">
    <location>
        <begin position="1"/>
        <end position="415"/>
    </location>
</feature>
<feature type="active site" description="Nucleophile" evidence="1">
    <location>
        <position position="50"/>
    </location>
</feature>
<feature type="binding site" evidence="1">
    <location>
        <begin position="49"/>
        <end position="52"/>
    </location>
    <ligand>
        <name>substrate</name>
    </ligand>
</feature>
<feature type="binding site" evidence="1">
    <location>
        <position position="104"/>
    </location>
    <ligand>
        <name>substrate</name>
    </ligand>
</feature>
<feature type="binding site" evidence="1">
    <location>
        <begin position="109"/>
        <end position="111"/>
    </location>
    <ligand>
        <name>substrate</name>
    </ligand>
</feature>
<feature type="binding site" evidence="1">
    <location>
        <position position="115"/>
    </location>
    <ligand>
        <name>substrate</name>
    </ligand>
</feature>
<feature type="binding site" evidence="1">
    <location>
        <begin position="184"/>
        <end position="189"/>
    </location>
    <ligand>
        <name>NADP(+)</name>
        <dbReference type="ChEBI" id="CHEBI:58349"/>
    </ligand>
</feature>
<feature type="site" description="Important for activity" evidence="1">
    <location>
        <position position="94"/>
    </location>
</feature>
<dbReference type="EC" id="1.2.1.70" evidence="1"/>
<dbReference type="EMBL" id="AE002098">
    <property type="protein sequence ID" value="AAF41004.1"/>
    <property type="molecule type" value="Genomic_DNA"/>
</dbReference>
<dbReference type="PIR" id="C81183">
    <property type="entry name" value="C81183"/>
</dbReference>
<dbReference type="RefSeq" id="NP_273620.1">
    <property type="nucleotide sequence ID" value="NC_003112.2"/>
</dbReference>
<dbReference type="RefSeq" id="WP_002225559.1">
    <property type="nucleotide sequence ID" value="NC_003112.2"/>
</dbReference>
<dbReference type="SMR" id="P56994"/>
<dbReference type="FunCoup" id="P56994">
    <property type="interactions" value="333"/>
</dbReference>
<dbReference type="STRING" id="122586.NMB0576"/>
<dbReference type="PaxDb" id="122586-NMB0576"/>
<dbReference type="KEGG" id="nme:NMB0576"/>
<dbReference type="PATRIC" id="fig|122586.8.peg.736"/>
<dbReference type="HOGENOM" id="CLU_035113_2_2_4"/>
<dbReference type="InParanoid" id="P56994"/>
<dbReference type="OrthoDB" id="110209at2"/>
<dbReference type="UniPathway" id="UPA00251">
    <property type="reaction ID" value="UER00316"/>
</dbReference>
<dbReference type="Proteomes" id="UP000000425">
    <property type="component" value="Chromosome"/>
</dbReference>
<dbReference type="GO" id="GO:0008883">
    <property type="term" value="F:glutamyl-tRNA reductase activity"/>
    <property type="evidence" value="ECO:0000318"/>
    <property type="project" value="GO_Central"/>
</dbReference>
<dbReference type="GO" id="GO:0050661">
    <property type="term" value="F:NADP binding"/>
    <property type="evidence" value="ECO:0007669"/>
    <property type="project" value="InterPro"/>
</dbReference>
<dbReference type="GO" id="GO:0019353">
    <property type="term" value="P:protoporphyrinogen IX biosynthetic process from glutamate"/>
    <property type="evidence" value="ECO:0000318"/>
    <property type="project" value="GO_Central"/>
</dbReference>
<dbReference type="CDD" id="cd05213">
    <property type="entry name" value="NAD_bind_Glutamyl_tRNA_reduct"/>
    <property type="match status" value="1"/>
</dbReference>
<dbReference type="FunFam" id="3.30.460.30:FF:000001">
    <property type="entry name" value="Glutamyl-tRNA reductase"/>
    <property type="match status" value="1"/>
</dbReference>
<dbReference type="FunFam" id="3.40.50.720:FF:000031">
    <property type="entry name" value="Glutamyl-tRNA reductase"/>
    <property type="match status" value="1"/>
</dbReference>
<dbReference type="Gene3D" id="3.30.460.30">
    <property type="entry name" value="Glutamyl-tRNA reductase, N-terminal domain"/>
    <property type="match status" value="1"/>
</dbReference>
<dbReference type="Gene3D" id="3.40.50.720">
    <property type="entry name" value="NAD(P)-binding Rossmann-like Domain"/>
    <property type="match status" value="1"/>
</dbReference>
<dbReference type="HAMAP" id="MF_00087">
    <property type="entry name" value="Glu_tRNA_reductase"/>
    <property type="match status" value="1"/>
</dbReference>
<dbReference type="InterPro" id="IPR000343">
    <property type="entry name" value="4pyrrol_synth_GluRdtase"/>
</dbReference>
<dbReference type="InterPro" id="IPR015896">
    <property type="entry name" value="4pyrrol_synth_GluRdtase_dimer"/>
</dbReference>
<dbReference type="InterPro" id="IPR015895">
    <property type="entry name" value="4pyrrol_synth_GluRdtase_N"/>
</dbReference>
<dbReference type="InterPro" id="IPR018214">
    <property type="entry name" value="GluRdtase_CS"/>
</dbReference>
<dbReference type="InterPro" id="IPR036453">
    <property type="entry name" value="GluRdtase_dimer_dom_sf"/>
</dbReference>
<dbReference type="InterPro" id="IPR036343">
    <property type="entry name" value="GluRdtase_N_sf"/>
</dbReference>
<dbReference type="InterPro" id="IPR036291">
    <property type="entry name" value="NAD(P)-bd_dom_sf"/>
</dbReference>
<dbReference type="InterPro" id="IPR006151">
    <property type="entry name" value="Shikm_DH/Glu-tRNA_Rdtase"/>
</dbReference>
<dbReference type="NCBIfam" id="TIGR01035">
    <property type="entry name" value="hemA"/>
    <property type="match status" value="1"/>
</dbReference>
<dbReference type="PANTHER" id="PTHR43013">
    <property type="entry name" value="GLUTAMYL-TRNA REDUCTASE"/>
    <property type="match status" value="1"/>
</dbReference>
<dbReference type="PANTHER" id="PTHR43013:SF1">
    <property type="entry name" value="GLUTAMYL-TRNA REDUCTASE"/>
    <property type="match status" value="1"/>
</dbReference>
<dbReference type="Pfam" id="PF00745">
    <property type="entry name" value="GlutR_dimer"/>
    <property type="match status" value="1"/>
</dbReference>
<dbReference type="Pfam" id="PF05201">
    <property type="entry name" value="GlutR_N"/>
    <property type="match status" value="1"/>
</dbReference>
<dbReference type="Pfam" id="PF01488">
    <property type="entry name" value="Shikimate_DH"/>
    <property type="match status" value="1"/>
</dbReference>
<dbReference type="PIRSF" id="PIRSF000445">
    <property type="entry name" value="4pyrrol_synth_GluRdtase"/>
    <property type="match status" value="1"/>
</dbReference>
<dbReference type="SUPFAM" id="SSF69742">
    <property type="entry name" value="Glutamyl tRNA-reductase catalytic, N-terminal domain"/>
    <property type="match status" value="1"/>
</dbReference>
<dbReference type="SUPFAM" id="SSF69075">
    <property type="entry name" value="Glutamyl tRNA-reductase dimerization domain"/>
    <property type="match status" value="1"/>
</dbReference>
<dbReference type="SUPFAM" id="SSF51735">
    <property type="entry name" value="NAD(P)-binding Rossmann-fold domains"/>
    <property type="match status" value="1"/>
</dbReference>
<dbReference type="PROSITE" id="PS00747">
    <property type="entry name" value="GLUTR"/>
    <property type="match status" value="1"/>
</dbReference>
<accession>P56994</accession>
<comment type="function">
    <text evidence="1">Catalyzes the NADPH-dependent reduction of glutamyl-tRNA(Glu) to glutamate 1-semialdehyde (GSA).</text>
</comment>
<comment type="catalytic activity">
    <reaction evidence="1">
        <text>(S)-4-amino-5-oxopentanoate + tRNA(Glu) + NADP(+) = L-glutamyl-tRNA(Glu) + NADPH + H(+)</text>
        <dbReference type="Rhea" id="RHEA:12344"/>
        <dbReference type="Rhea" id="RHEA-COMP:9663"/>
        <dbReference type="Rhea" id="RHEA-COMP:9680"/>
        <dbReference type="ChEBI" id="CHEBI:15378"/>
        <dbReference type="ChEBI" id="CHEBI:57501"/>
        <dbReference type="ChEBI" id="CHEBI:57783"/>
        <dbReference type="ChEBI" id="CHEBI:58349"/>
        <dbReference type="ChEBI" id="CHEBI:78442"/>
        <dbReference type="ChEBI" id="CHEBI:78520"/>
        <dbReference type="EC" id="1.2.1.70"/>
    </reaction>
</comment>
<comment type="pathway">
    <text evidence="1">Porphyrin-containing compound metabolism; protoporphyrin-IX biosynthesis; 5-aminolevulinate from L-glutamyl-tRNA(Glu): step 1/2.</text>
</comment>
<comment type="subunit">
    <text evidence="1">Homodimer.</text>
</comment>
<comment type="domain">
    <text evidence="1">Possesses an unusual extended V-shaped dimeric structure with each monomer consisting of three distinct domains arranged along a curved 'spinal' alpha-helix. The N-terminal catalytic domain specifically recognizes the glutamate moiety of the substrate. The second domain is the NADPH-binding domain, and the third C-terminal domain is responsible for dimerization.</text>
</comment>
<comment type="miscellaneous">
    <text evidence="1">During catalysis, the active site Cys acts as a nucleophile attacking the alpha-carbonyl group of tRNA-bound glutamate with the formation of a thioester intermediate between enzyme and glutamate, and the concomitant release of tRNA(Glu). The thioester intermediate is finally reduced by direct hydride transfer from NADPH, to form the product GSA.</text>
</comment>
<comment type="similarity">
    <text evidence="1">Belongs to the glutamyl-tRNA reductase family.</text>
</comment>
<keyword id="KW-0521">NADP</keyword>
<keyword id="KW-0560">Oxidoreductase</keyword>
<keyword id="KW-0627">Porphyrin biosynthesis</keyword>
<keyword id="KW-1185">Reference proteome</keyword>
<sequence length="415" mass="45480">MQLTAVGLNHQTAPLSIREKLAFAAAALPKAVRNLARSNAATEAVILSTCNRTELYCVGDSEEIIRWLADYHSLPIEEIRPYLYALDMQETVRHAFRVACGLDSMVLGEPQILGQIKDAVRVAQEQESMGKKLNALFQKTFSVAKEVRTDTAVGENSVSMASASVKLAEQIFPDIGDLNVLFIGAGEMIELVATYFAAKSPRLMTVANRTLARAQELCDKLGVNAEPCLLSDLPAILHDYDVVVSSTASQLPIVGKGMVERALKQRQSMPLFMLDLAVPRDIEAEVGDLNDAYLYTVDDMVNIVQSGKEARQKAAAAAETLVSEKVAEFVRQQQGRQSVPLIKALRDEGEKARKQVLENAMKQLAKGATAEEVLERLSVQLTNKLLHSPTQTLNKAGEEDKDLVHAVAQIYHLDK</sequence>
<name>HEM1_NEIMB</name>